<organism>
    <name type="scientific">Actinobacillus pleuropneumoniae serotype 3 (strain JL03)</name>
    <dbReference type="NCBI Taxonomy" id="434271"/>
    <lineage>
        <taxon>Bacteria</taxon>
        <taxon>Pseudomonadati</taxon>
        <taxon>Pseudomonadota</taxon>
        <taxon>Gammaproteobacteria</taxon>
        <taxon>Pasteurellales</taxon>
        <taxon>Pasteurellaceae</taxon>
        <taxon>Actinobacillus</taxon>
    </lineage>
</organism>
<keyword id="KW-0028">Amino-acid biosynthesis</keyword>
<keyword id="KW-0057">Aromatic amino acid biosynthesis</keyword>
<keyword id="KW-0274">FAD</keyword>
<keyword id="KW-0285">Flavoprotein</keyword>
<keyword id="KW-0288">FMN</keyword>
<keyword id="KW-0456">Lyase</keyword>
<keyword id="KW-0521">NADP</keyword>
<protein>
    <recommendedName>
        <fullName evidence="1">Chorismate synthase</fullName>
        <shortName evidence="1">CS</shortName>
        <ecNumber evidence="1">4.2.3.5</ecNumber>
    </recommendedName>
    <alternativeName>
        <fullName evidence="1">5-enolpyruvylshikimate-3-phosphate phospholyase</fullName>
    </alternativeName>
</protein>
<reference key="1">
    <citation type="journal article" date="2008" name="PLoS ONE">
        <title>Genome biology of Actinobacillus pleuropneumoniae JL03, an isolate of serotype 3 prevalent in China.</title>
        <authorList>
            <person name="Xu Z."/>
            <person name="Zhou Y."/>
            <person name="Li L."/>
            <person name="Zhou R."/>
            <person name="Xiao S."/>
            <person name="Wan Y."/>
            <person name="Zhang S."/>
            <person name="Wang K."/>
            <person name="Li W."/>
            <person name="Li L."/>
            <person name="Jin H."/>
            <person name="Kang M."/>
            <person name="Dalai B."/>
            <person name="Li T."/>
            <person name="Liu L."/>
            <person name="Cheng Y."/>
            <person name="Zhang L."/>
            <person name="Xu T."/>
            <person name="Zheng H."/>
            <person name="Pu S."/>
            <person name="Wang B."/>
            <person name="Gu W."/>
            <person name="Zhang X.L."/>
            <person name="Zhu G.-F."/>
            <person name="Wang S."/>
            <person name="Zhao G.-P."/>
            <person name="Chen H."/>
        </authorList>
    </citation>
    <scope>NUCLEOTIDE SEQUENCE [LARGE SCALE GENOMIC DNA]</scope>
    <source>
        <strain>JL03</strain>
    </source>
</reference>
<sequence length="360" mass="38951">MAGNSIGQLFKVTTFGESHGIALGCIVDGVPPNMALSEADIQPDLDRRKPGTSRYTTPRREDDEVQILSGVFEGKTTGTSIGLIIKNADQRSKDYGDIADKFRPGHADYTYQQKYGIRDYRGGGRSSARETAMRVAAGAIAKKYLREQFGIEVRGYLSQIGNVKINPETVADISKIDWQQVASNPFFCPDPVAVEGFDELIRELKKDGDSIGAKLTVVAENVPVGLGEPVFDRLDADLAHALMSINAVKAVEIGDGFDVVEQRGSEHRDEMTPQGFVSNHAGGILGGISSGQPIIAHIALKPTSSIMVPGRSVNLNNEQVELITKGRHDPCVGIRAVPIAEAMTAIILLDHLLRFKAQCR</sequence>
<gene>
    <name evidence="1" type="primary">aroC</name>
    <name type="ordered locus">APJL_0749</name>
</gene>
<accession>B0BP27</accession>
<feature type="chain" id="PRO_1000115323" description="Chorismate synthase">
    <location>
        <begin position="1"/>
        <end position="360"/>
    </location>
</feature>
<feature type="binding site" evidence="1">
    <location>
        <position position="48"/>
    </location>
    <ligand>
        <name>NADP(+)</name>
        <dbReference type="ChEBI" id="CHEBI:58349"/>
    </ligand>
</feature>
<feature type="binding site" evidence="1">
    <location>
        <position position="54"/>
    </location>
    <ligand>
        <name>NADP(+)</name>
        <dbReference type="ChEBI" id="CHEBI:58349"/>
    </ligand>
</feature>
<feature type="binding site" evidence="1">
    <location>
        <begin position="125"/>
        <end position="127"/>
    </location>
    <ligand>
        <name>FMN</name>
        <dbReference type="ChEBI" id="CHEBI:58210"/>
    </ligand>
</feature>
<feature type="binding site" evidence="1">
    <location>
        <begin position="246"/>
        <end position="247"/>
    </location>
    <ligand>
        <name>FMN</name>
        <dbReference type="ChEBI" id="CHEBI:58210"/>
    </ligand>
</feature>
<feature type="binding site" evidence="1">
    <location>
        <position position="286"/>
    </location>
    <ligand>
        <name>FMN</name>
        <dbReference type="ChEBI" id="CHEBI:58210"/>
    </ligand>
</feature>
<feature type="binding site" evidence="1">
    <location>
        <begin position="301"/>
        <end position="305"/>
    </location>
    <ligand>
        <name>FMN</name>
        <dbReference type="ChEBI" id="CHEBI:58210"/>
    </ligand>
</feature>
<feature type="binding site" evidence="1">
    <location>
        <position position="327"/>
    </location>
    <ligand>
        <name>FMN</name>
        <dbReference type="ChEBI" id="CHEBI:58210"/>
    </ligand>
</feature>
<name>AROC_ACTPJ</name>
<evidence type="ECO:0000255" key="1">
    <source>
        <dbReference type="HAMAP-Rule" id="MF_00300"/>
    </source>
</evidence>
<proteinExistence type="inferred from homology"/>
<comment type="function">
    <text evidence="1">Catalyzes the anti-1,4-elimination of the C-3 phosphate and the C-6 proR hydrogen from 5-enolpyruvylshikimate-3-phosphate (EPSP) to yield chorismate, which is the branch point compound that serves as the starting substrate for the three terminal pathways of aromatic amino acid biosynthesis. This reaction introduces a second double bond into the aromatic ring system.</text>
</comment>
<comment type="catalytic activity">
    <reaction evidence="1">
        <text>5-O-(1-carboxyvinyl)-3-phosphoshikimate = chorismate + phosphate</text>
        <dbReference type="Rhea" id="RHEA:21020"/>
        <dbReference type="ChEBI" id="CHEBI:29748"/>
        <dbReference type="ChEBI" id="CHEBI:43474"/>
        <dbReference type="ChEBI" id="CHEBI:57701"/>
        <dbReference type="EC" id="4.2.3.5"/>
    </reaction>
</comment>
<comment type="cofactor">
    <cofactor evidence="1">
        <name>FMNH2</name>
        <dbReference type="ChEBI" id="CHEBI:57618"/>
    </cofactor>
    <text evidence="1">Reduced FMN (FMNH(2)).</text>
</comment>
<comment type="pathway">
    <text evidence="1">Metabolic intermediate biosynthesis; chorismate biosynthesis; chorismate from D-erythrose 4-phosphate and phosphoenolpyruvate: step 7/7.</text>
</comment>
<comment type="subunit">
    <text evidence="1">Homotetramer.</text>
</comment>
<comment type="similarity">
    <text evidence="1">Belongs to the chorismate synthase family.</text>
</comment>
<dbReference type="EC" id="4.2.3.5" evidence="1"/>
<dbReference type="EMBL" id="CP000687">
    <property type="protein sequence ID" value="ABY69312.1"/>
    <property type="molecule type" value="Genomic_DNA"/>
</dbReference>
<dbReference type="RefSeq" id="WP_005607638.1">
    <property type="nucleotide sequence ID" value="NC_010278.1"/>
</dbReference>
<dbReference type="SMR" id="B0BP27"/>
<dbReference type="KEGG" id="apj:APJL_0749"/>
<dbReference type="HOGENOM" id="CLU_034547_0_2_6"/>
<dbReference type="UniPathway" id="UPA00053">
    <property type="reaction ID" value="UER00090"/>
</dbReference>
<dbReference type="Proteomes" id="UP000008547">
    <property type="component" value="Chromosome"/>
</dbReference>
<dbReference type="GO" id="GO:0005829">
    <property type="term" value="C:cytosol"/>
    <property type="evidence" value="ECO:0007669"/>
    <property type="project" value="TreeGrafter"/>
</dbReference>
<dbReference type="GO" id="GO:0004107">
    <property type="term" value="F:chorismate synthase activity"/>
    <property type="evidence" value="ECO:0007669"/>
    <property type="project" value="UniProtKB-UniRule"/>
</dbReference>
<dbReference type="GO" id="GO:0010181">
    <property type="term" value="F:FMN binding"/>
    <property type="evidence" value="ECO:0007669"/>
    <property type="project" value="TreeGrafter"/>
</dbReference>
<dbReference type="GO" id="GO:0008652">
    <property type="term" value="P:amino acid biosynthetic process"/>
    <property type="evidence" value="ECO:0007669"/>
    <property type="project" value="UniProtKB-KW"/>
</dbReference>
<dbReference type="GO" id="GO:0009073">
    <property type="term" value="P:aromatic amino acid family biosynthetic process"/>
    <property type="evidence" value="ECO:0007669"/>
    <property type="project" value="UniProtKB-KW"/>
</dbReference>
<dbReference type="GO" id="GO:0009423">
    <property type="term" value="P:chorismate biosynthetic process"/>
    <property type="evidence" value="ECO:0007669"/>
    <property type="project" value="UniProtKB-UniRule"/>
</dbReference>
<dbReference type="CDD" id="cd07304">
    <property type="entry name" value="Chorismate_synthase"/>
    <property type="match status" value="1"/>
</dbReference>
<dbReference type="FunFam" id="3.60.150.10:FF:000001">
    <property type="entry name" value="Chorismate synthase"/>
    <property type="match status" value="1"/>
</dbReference>
<dbReference type="Gene3D" id="3.60.150.10">
    <property type="entry name" value="Chorismate synthase AroC"/>
    <property type="match status" value="1"/>
</dbReference>
<dbReference type="HAMAP" id="MF_00300">
    <property type="entry name" value="Chorismate_synth"/>
    <property type="match status" value="1"/>
</dbReference>
<dbReference type="InterPro" id="IPR000453">
    <property type="entry name" value="Chorismate_synth"/>
</dbReference>
<dbReference type="InterPro" id="IPR035904">
    <property type="entry name" value="Chorismate_synth_AroC_sf"/>
</dbReference>
<dbReference type="InterPro" id="IPR020541">
    <property type="entry name" value="Chorismate_synthase_CS"/>
</dbReference>
<dbReference type="NCBIfam" id="TIGR00033">
    <property type="entry name" value="aroC"/>
    <property type="match status" value="1"/>
</dbReference>
<dbReference type="NCBIfam" id="NF003793">
    <property type="entry name" value="PRK05382.1"/>
    <property type="match status" value="1"/>
</dbReference>
<dbReference type="PANTHER" id="PTHR21085">
    <property type="entry name" value="CHORISMATE SYNTHASE"/>
    <property type="match status" value="1"/>
</dbReference>
<dbReference type="PANTHER" id="PTHR21085:SF0">
    <property type="entry name" value="CHORISMATE SYNTHASE"/>
    <property type="match status" value="1"/>
</dbReference>
<dbReference type="Pfam" id="PF01264">
    <property type="entry name" value="Chorismate_synt"/>
    <property type="match status" value="1"/>
</dbReference>
<dbReference type="PIRSF" id="PIRSF001456">
    <property type="entry name" value="Chorismate_synth"/>
    <property type="match status" value="1"/>
</dbReference>
<dbReference type="SUPFAM" id="SSF103263">
    <property type="entry name" value="Chorismate synthase, AroC"/>
    <property type="match status" value="1"/>
</dbReference>
<dbReference type="PROSITE" id="PS00787">
    <property type="entry name" value="CHORISMATE_SYNTHASE_1"/>
    <property type="match status" value="1"/>
</dbReference>
<dbReference type="PROSITE" id="PS00788">
    <property type="entry name" value="CHORISMATE_SYNTHASE_2"/>
    <property type="match status" value="1"/>
</dbReference>
<dbReference type="PROSITE" id="PS00789">
    <property type="entry name" value="CHORISMATE_SYNTHASE_3"/>
    <property type="match status" value="1"/>
</dbReference>